<accession>O55186</accession>
<accession>Q542R7</accession>
<feature type="signal peptide" evidence="2">
    <location>
        <begin position="1"/>
        <end position="23"/>
    </location>
</feature>
<feature type="chain" id="PRO_0000036112" description="CD59A glycoprotein">
    <location>
        <begin position="24"/>
        <end position="96"/>
    </location>
</feature>
<feature type="propeptide" id="PRO_0000036113" description="Removed in mature form" evidence="1">
    <location>
        <begin position="97"/>
        <end position="123"/>
    </location>
</feature>
<feature type="domain" description="UPAR/Ly6">
    <location>
        <begin position="24"/>
        <end position="96"/>
    </location>
</feature>
<feature type="glycosylation site" description="N-linked (GlcNAc...) asparagine" evidence="2">
    <location>
        <position position="40"/>
    </location>
</feature>
<feature type="glycosylation site" description="N-linked (GlcNAc...) asparagine" evidence="2">
    <location>
        <position position="94"/>
    </location>
</feature>
<feature type="disulfide bond" evidence="1">
    <location>
        <begin position="26"/>
        <end position="50"/>
    </location>
</feature>
<feature type="disulfide bond" evidence="1">
    <location>
        <begin position="29"/>
        <end position="37"/>
    </location>
</feature>
<feature type="disulfide bond" evidence="1">
    <location>
        <begin position="43"/>
        <end position="63"/>
    </location>
</feature>
<feature type="disulfide bond" evidence="1">
    <location>
        <begin position="69"/>
        <end position="87"/>
    </location>
</feature>
<feature type="disulfide bond" evidence="1">
    <location>
        <begin position="88"/>
        <end position="93"/>
    </location>
</feature>
<keyword id="KW-1003">Cell membrane</keyword>
<keyword id="KW-1015">Disulfide bond</keyword>
<keyword id="KW-0325">Glycoprotein</keyword>
<keyword id="KW-0336">GPI-anchor</keyword>
<keyword id="KW-0449">Lipoprotein</keyword>
<keyword id="KW-0472">Membrane</keyword>
<keyword id="KW-1185">Reference proteome</keyword>
<keyword id="KW-0964">Secreted</keyword>
<keyword id="KW-0732">Signal</keyword>
<protein>
    <recommendedName>
        <fullName>CD59A glycoprotein</fullName>
    </recommendedName>
    <alternativeName>
        <fullName>MAC-inhibitory protein</fullName>
        <shortName>MAC-IP</shortName>
    </alternativeName>
    <alternativeName>
        <fullName>Membrane attack complex inhibition factor</fullName>
        <shortName>MACIF</shortName>
    </alternativeName>
    <alternativeName>
        <fullName>Protectin</fullName>
    </alternativeName>
    <cdAntigenName>CD59</cdAntigenName>
</protein>
<reference key="1">
    <citation type="journal article" date="1997" name="J. Immunol.">
        <title>Molecular cloning, chromosomal localization, expression, and functional characterization of the mouse analogue of human CD59.</title>
        <authorList>
            <person name="Powell M.B."/>
            <person name="Marchbank K.J."/>
            <person name="Rushmere N.K."/>
            <person name="van den Berg C.W."/>
            <person name="Morgan B.P."/>
        </authorList>
    </citation>
    <scope>NUCLEOTIDE SEQUENCE [MRNA]</scope>
    <scope>TISSUE SPECIFICITY</scope>
    <source>
        <strain>C57BL/6J</strain>
        <tissue>Kidney</tissue>
    </source>
</reference>
<reference key="2">
    <citation type="journal article" date="2000" name="Cytogenet. Cell Genet.">
        <title>Genomic structure and chromosome location of the gene encoding mouse CD59.</title>
        <authorList>
            <person name="Holt D.S."/>
            <person name="Powell M.B."/>
            <person name="Rushmere N.K."/>
            <person name="Morgan B.P."/>
        </authorList>
    </citation>
    <scope>NUCLEOTIDE SEQUENCE [GENOMIC DNA]</scope>
    <source>
        <strain>129/Sv</strain>
    </source>
</reference>
<reference key="3">
    <citation type="journal article" date="2005" name="Science">
        <title>The transcriptional landscape of the mammalian genome.</title>
        <authorList>
            <person name="Carninci P."/>
            <person name="Kasukawa T."/>
            <person name="Katayama S."/>
            <person name="Gough J."/>
            <person name="Frith M.C."/>
            <person name="Maeda N."/>
            <person name="Oyama R."/>
            <person name="Ravasi T."/>
            <person name="Lenhard B."/>
            <person name="Wells C."/>
            <person name="Kodzius R."/>
            <person name="Shimokawa K."/>
            <person name="Bajic V.B."/>
            <person name="Brenner S.E."/>
            <person name="Batalov S."/>
            <person name="Forrest A.R."/>
            <person name="Zavolan M."/>
            <person name="Davis M.J."/>
            <person name="Wilming L.G."/>
            <person name="Aidinis V."/>
            <person name="Allen J.E."/>
            <person name="Ambesi-Impiombato A."/>
            <person name="Apweiler R."/>
            <person name="Aturaliya R.N."/>
            <person name="Bailey T.L."/>
            <person name="Bansal M."/>
            <person name="Baxter L."/>
            <person name="Beisel K.W."/>
            <person name="Bersano T."/>
            <person name="Bono H."/>
            <person name="Chalk A.M."/>
            <person name="Chiu K.P."/>
            <person name="Choudhary V."/>
            <person name="Christoffels A."/>
            <person name="Clutterbuck D.R."/>
            <person name="Crowe M.L."/>
            <person name="Dalla E."/>
            <person name="Dalrymple B.P."/>
            <person name="de Bono B."/>
            <person name="Della Gatta G."/>
            <person name="di Bernardo D."/>
            <person name="Down T."/>
            <person name="Engstrom P."/>
            <person name="Fagiolini M."/>
            <person name="Faulkner G."/>
            <person name="Fletcher C.F."/>
            <person name="Fukushima T."/>
            <person name="Furuno M."/>
            <person name="Futaki S."/>
            <person name="Gariboldi M."/>
            <person name="Georgii-Hemming P."/>
            <person name="Gingeras T.R."/>
            <person name="Gojobori T."/>
            <person name="Green R.E."/>
            <person name="Gustincich S."/>
            <person name="Harbers M."/>
            <person name="Hayashi Y."/>
            <person name="Hensch T.K."/>
            <person name="Hirokawa N."/>
            <person name="Hill D."/>
            <person name="Huminiecki L."/>
            <person name="Iacono M."/>
            <person name="Ikeo K."/>
            <person name="Iwama A."/>
            <person name="Ishikawa T."/>
            <person name="Jakt M."/>
            <person name="Kanapin A."/>
            <person name="Katoh M."/>
            <person name="Kawasawa Y."/>
            <person name="Kelso J."/>
            <person name="Kitamura H."/>
            <person name="Kitano H."/>
            <person name="Kollias G."/>
            <person name="Krishnan S.P."/>
            <person name="Kruger A."/>
            <person name="Kummerfeld S.K."/>
            <person name="Kurochkin I.V."/>
            <person name="Lareau L.F."/>
            <person name="Lazarevic D."/>
            <person name="Lipovich L."/>
            <person name="Liu J."/>
            <person name="Liuni S."/>
            <person name="McWilliam S."/>
            <person name="Madan Babu M."/>
            <person name="Madera M."/>
            <person name="Marchionni L."/>
            <person name="Matsuda H."/>
            <person name="Matsuzawa S."/>
            <person name="Miki H."/>
            <person name="Mignone F."/>
            <person name="Miyake S."/>
            <person name="Morris K."/>
            <person name="Mottagui-Tabar S."/>
            <person name="Mulder N."/>
            <person name="Nakano N."/>
            <person name="Nakauchi H."/>
            <person name="Ng P."/>
            <person name="Nilsson R."/>
            <person name="Nishiguchi S."/>
            <person name="Nishikawa S."/>
            <person name="Nori F."/>
            <person name="Ohara O."/>
            <person name="Okazaki Y."/>
            <person name="Orlando V."/>
            <person name="Pang K.C."/>
            <person name="Pavan W.J."/>
            <person name="Pavesi G."/>
            <person name="Pesole G."/>
            <person name="Petrovsky N."/>
            <person name="Piazza S."/>
            <person name="Reed J."/>
            <person name="Reid J.F."/>
            <person name="Ring B.Z."/>
            <person name="Ringwald M."/>
            <person name="Rost B."/>
            <person name="Ruan Y."/>
            <person name="Salzberg S.L."/>
            <person name="Sandelin A."/>
            <person name="Schneider C."/>
            <person name="Schoenbach C."/>
            <person name="Sekiguchi K."/>
            <person name="Semple C.A."/>
            <person name="Seno S."/>
            <person name="Sessa L."/>
            <person name="Sheng Y."/>
            <person name="Shibata Y."/>
            <person name="Shimada H."/>
            <person name="Shimada K."/>
            <person name="Silva D."/>
            <person name="Sinclair B."/>
            <person name="Sperling S."/>
            <person name="Stupka E."/>
            <person name="Sugiura K."/>
            <person name="Sultana R."/>
            <person name="Takenaka Y."/>
            <person name="Taki K."/>
            <person name="Tammoja K."/>
            <person name="Tan S.L."/>
            <person name="Tang S."/>
            <person name="Taylor M.S."/>
            <person name="Tegner J."/>
            <person name="Teichmann S.A."/>
            <person name="Ueda H.R."/>
            <person name="van Nimwegen E."/>
            <person name="Verardo R."/>
            <person name="Wei C.L."/>
            <person name="Yagi K."/>
            <person name="Yamanishi H."/>
            <person name="Zabarovsky E."/>
            <person name="Zhu S."/>
            <person name="Zimmer A."/>
            <person name="Hide W."/>
            <person name="Bult C."/>
            <person name="Grimmond S.M."/>
            <person name="Teasdale R.D."/>
            <person name="Liu E.T."/>
            <person name="Brusic V."/>
            <person name="Quackenbush J."/>
            <person name="Wahlestedt C."/>
            <person name="Mattick J.S."/>
            <person name="Hume D.A."/>
            <person name="Kai C."/>
            <person name="Sasaki D."/>
            <person name="Tomaru Y."/>
            <person name="Fukuda S."/>
            <person name="Kanamori-Katayama M."/>
            <person name="Suzuki M."/>
            <person name="Aoki J."/>
            <person name="Arakawa T."/>
            <person name="Iida J."/>
            <person name="Imamura K."/>
            <person name="Itoh M."/>
            <person name="Kato T."/>
            <person name="Kawaji H."/>
            <person name="Kawagashira N."/>
            <person name="Kawashima T."/>
            <person name="Kojima M."/>
            <person name="Kondo S."/>
            <person name="Konno H."/>
            <person name="Nakano K."/>
            <person name="Ninomiya N."/>
            <person name="Nishio T."/>
            <person name="Okada M."/>
            <person name="Plessy C."/>
            <person name="Shibata K."/>
            <person name="Shiraki T."/>
            <person name="Suzuki S."/>
            <person name="Tagami M."/>
            <person name="Waki K."/>
            <person name="Watahiki A."/>
            <person name="Okamura-Oho Y."/>
            <person name="Suzuki H."/>
            <person name="Kawai J."/>
            <person name="Hayashizaki Y."/>
        </authorList>
    </citation>
    <scope>NUCLEOTIDE SEQUENCE [LARGE SCALE MRNA]</scope>
    <source>
        <strain>C57BL/6J</strain>
        <tissue>Kidney</tissue>
        <tissue>Medulla oblongata</tissue>
        <tissue>Placenta</tissue>
        <tissue>Retina</tissue>
    </source>
</reference>
<name>CD59A_MOUSE</name>
<proteinExistence type="evidence at transcript level"/>
<evidence type="ECO:0000250" key="1">
    <source>
        <dbReference type="UniProtKB" id="P13987"/>
    </source>
</evidence>
<evidence type="ECO:0000255" key="2"/>
<evidence type="ECO:0000269" key="3">
    <source>
    </source>
</evidence>
<evidence type="ECO:0000303" key="4">
    <source>
    </source>
</evidence>
<evidence type="ECO:0000312" key="5">
    <source>
        <dbReference type="MGI" id="MGI:109177"/>
    </source>
</evidence>
<organism>
    <name type="scientific">Mus musculus</name>
    <name type="common">Mouse</name>
    <dbReference type="NCBI Taxonomy" id="10090"/>
    <lineage>
        <taxon>Eukaryota</taxon>
        <taxon>Metazoa</taxon>
        <taxon>Chordata</taxon>
        <taxon>Craniata</taxon>
        <taxon>Vertebrata</taxon>
        <taxon>Euteleostomi</taxon>
        <taxon>Mammalia</taxon>
        <taxon>Eutheria</taxon>
        <taxon>Euarchontoglires</taxon>
        <taxon>Glires</taxon>
        <taxon>Rodentia</taxon>
        <taxon>Myomorpha</taxon>
        <taxon>Muroidea</taxon>
        <taxon>Muridae</taxon>
        <taxon>Murinae</taxon>
        <taxon>Mus</taxon>
        <taxon>Mus</taxon>
    </lineage>
</organism>
<gene>
    <name evidence="5" type="primary">Cd59a</name>
    <name evidence="4" type="synonym">Cd59</name>
</gene>
<dbReference type="EMBL" id="U60473">
    <property type="protein sequence ID" value="AAC00055.1"/>
    <property type="molecule type" value="mRNA"/>
</dbReference>
<dbReference type="EMBL" id="AF247652">
    <property type="protein sequence ID" value="AAG15314.1"/>
    <property type="molecule type" value="Genomic_DNA"/>
</dbReference>
<dbReference type="EMBL" id="AK002743">
    <property type="protein sequence ID" value="BAB22321.1"/>
    <property type="molecule type" value="mRNA"/>
</dbReference>
<dbReference type="EMBL" id="AK005507">
    <property type="protein sequence ID" value="BAB24087.1"/>
    <property type="molecule type" value="mRNA"/>
</dbReference>
<dbReference type="EMBL" id="AK018136">
    <property type="protein sequence ID" value="BAB31088.1"/>
    <property type="molecule type" value="mRNA"/>
</dbReference>
<dbReference type="EMBL" id="AK080728">
    <property type="protein sequence ID" value="BAC37996.1"/>
    <property type="molecule type" value="mRNA"/>
</dbReference>
<dbReference type="CCDS" id="CCDS16487.1"/>
<dbReference type="RefSeq" id="NP_001104530.1">
    <property type="nucleotide sequence ID" value="NM_001111060.3"/>
</dbReference>
<dbReference type="RefSeq" id="NP_001403852.1">
    <property type="nucleotide sequence ID" value="NM_001416923.1"/>
</dbReference>
<dbReference type="RefSeq" id="NP_001403853.1">
    <property type="nucleotide sequence ID" value="NM_001416924.1"/>
</dbReference>
<dbReference type="RefSeq" id="NP_001403854.1">
    <property type="nucleotide sequence ID" value="NM_001416925.1"/>
</dbReference>
<dbReference type="RefSeq" id="NP_031678.1">
    <property type="nucleotide sequence ID" value="NM_007652.6"/>
</dbReference>
<dbReference type="RefSeq" id="XP_006498713.1">
    <property type="nucleotide sequence ID" value="XM_006498650.3"/>
</dbReference>
<dbReference type="RefSeq" id="XP_006498714.1">
    <property type="nucleotide sequence ID" value="XM_006498651.3"/>
</dbReference>
<dbReference type="SMR" id="O55186"/>
<dbReference type="FunCoup" id="O55186">
    <property type="interactions" value="268"/>
</dbReference>
<dbReference type="STRING" id="10090.ENSMUSP00000132774"/>
<dbReference type="GlyCosmos" id="O55186">
    <property type="glycosylation" value="2 sites, No reported glycans"/>
</dbReference>
<dbReference type="GlyGen" id="O55186">
    <property type="glycosylation" value="2 sites"/>
</dbReference>
<dbReference type="jPOST" id="O55186"/>
<dbReference type="PaxDb" id="10090-ENSMUSP00000048041"/>
<dbReference type="ProteomicsDB" id="265626"/>
<dbReference type="DNASU" id="12509"/>
<dbReference type="Ensembl" id="ENSMUST00000040423.12">
    <property type="protein sequence ID" value="ENSMUSP00000048041.6"/>
    <property type="gene ID" value="ENSMUSG00000032679.13"/>
</dbReference>
<dbReference type="Ensembl" id="ENSMUST00000168176.8">
    <property type="protein sequence ID" value="ENSMUSP00000132774.2"/>
    <property type="gene ID" value="ENSMUSG00000032679.13"/>
</dbReference>
<dbReference type="GeneID" id="12509"/>
<dbReference type="KEGG" id="mmu:12509"/>
<dbReference type="UCSC" id="uc008ljo.3">
    <property type="organism name" value="mouse"/>
</dbReference>
<dbReference type="AGR" id="MGI:109177"/>
<dbReference type="CTD" id="12509"/>
<dbReference type="MGI" id="MGI:109177">
    <property type="gene designation" value="Cd59a"/>
</dbReference>
<dbReference type="VEuPathDB" id="HostDB:ENSMUSG00000032679"/>
<dbReference type="GeneTree" id="ENSGT00390000016309"/>
<dbReference type="HOGENOM" id="CLU_147732_1_0_1"/>
<dbReference type="InParanoid" id="O55186"/>
<dbReference type="OMA" id="CWKMSQC"/>
<dbReference type="OrthoDB" id="10011411at2759"/>
<dbReference type="PhylomeDB" id="O55186"/>
<dbReference type="TreeFam" id="TF338524"/>
<dbReference type="BioGRID-ORCS" id="12509">
    <property type="hits" value="4 hits in 79 CRISPR screens"/>
</dbReference>
<dbReference type="ChiTaRS" id="Cd59a">
    <property type="organism name" value="mouse"/>
</dbReference>
<dbReference type="PRO" id="PR:O55186"/>
<dbReference type="Proteomes" id="UP000000589">
    <property type="component" value="Chromosome 2"/>
</dbReference>
<dbReference type="RNAct" id="O55186">
    <property type="molecule type" value="protein"/>
</dbReference>
<dbReference type="Bgee" id="ENSMUSG00000032679">
    <property type="expression patterns" value="Expressed in heart right ventricle and 235 other cell types or tissues"/>
</dbReference>
<dbReference type="ExpressionAtlas" id="O55186">
    <property type="expression patterns" value="baseline and differential"/>
</dbReference>
<dbReference type="GO" id="GO:0009986">
    <property type="term" value="C:cell surface"/>
    <property type="evidence" value="ECO:0000314"/>
    <property type="project" value="MGI"/>
</dbReference>
<dbReference type="GO" id="GO:0009897">
    <property type="term" value="C:external side of plasma membrane"/>
    <property type="evidence" value="ECO:0000314"/>
    <property type="project" value="MGI"/>
</dbReference>
<dbReference type="GO" id="GO:0005886">
    <property type="term" value="C:plasma membrane"/>
    <property type="evidence" value="ECO:0000314"/>
    <property type="project" value="MGI"/>
</dbReference>
<dbReference type="GO" id="GO:0001971">
    <property type="term" value="P:negative regulation of activation of membrane attack complex"/>
    <property type="evidence" value="ECO:0000314"/>
    <property type="project" value="MGI"/>
</dbReference>
<dbReference type="GO" id="GO:0016525">
    <property type="term" value="P:negative regulation of angiogenesis"/>
    <property type="evidence" value="ECO:0000315"/>
    <property type="project" value="BHF-UCL"/>
</dbReference>
<dbReference type="GO" id="GO:0045916">
    <property type="term" value="P:negative regulation of complement activation"/>
    <property type="evidence" value="ECO:0000314"/>
    <property type="project" value="BHF-UCL"/>
</dbReference>
<dbReference type="GO" id="GO:0090272">
    <property type="term" value="P:negative regulation of fibroblast growth factor production"/>
    <property type="evidence" value="ECO:0000314"/>
    <property type="project" value="BHF-UCL"/>
</dbReference>
<dbReference type="GO" id="GO:0030948">
    <property type="term" value="P:negative regulation of vascular endothelial growth factor receptor signaling pathway"/>
    <property type="evidence" value="ECO:0000315"/>
    <property type="project" value="BHF-UCL"/>
</dbReference>
<dbReference type="GO" id="GO:0030449">
    <property type="term" value="P:regulation of complement activation"/>
    <property type="evidence" value="ECO:0000266"/>
    <property type="project" value="MGI"/>
</dbReference>
<dbReference type="GO" id="GO:1903659">
    <property type="term" value="P:regulation of complement-dependent cytotoxicity"/>
    <property type="evidence" value="ECO:0000266"/>
    <property type="project" value="MGI"/>
</dbReference>
<dbReference type="CDD" id="cd23554">
    <property type="entry name" value="TFP_LU_ECD_CD59"/>
    <property type="match status" value="1"/>
</dbReference>
<dbReference type="FunFam" id="2.10.60.10:FF:000023">
    <property type="entry name" value="CD59 glycoprotein preproprotein"/>
    <property type="match status" value="1"/>
</dbReference>
<dbReference type="Gene3D" id="2.10.60.10">
    <property type="entry name" value="CD59"/>
    <property type="match status" value="1"/>
</dbReference>
<dbReference type="InterPro" id="IPR056949">
    <property type="entry name" value="CD59"/>
</dbReference>
<dbReference type="InterPro" id="IPR016054">
    <property type="entry name" value="LY6_UPA_recep-like"/>
</dbReference>
<dbReference type="InterPro" id="IPR045860">
    <property type="entry name" value="Snake_toxin-like_sf"/>
</dbReference>
<dbReference type="PANTHER" id="PTHR10036">
    <property type="entry name" value="CD59 GLYCOPROTEIN"/>
    <property type="match status" value="1"/>
</dbReference>
<dbReference type="PANTHER" id="PTHR10036:SF24">
    <property type="entry name" value="CD59 GLYCOPROTEIN"/>
    <property type="match status" value="1"/>
</dbReference>
<dbReference type="Pfam" id="PF25152">
    <property type="entry name" value="CD59"/>
    <property type="match status" value="1"/>
</dbReference>
<dbReference type="SMART" id="SM00134">
    <property type="entry name" value="LU"/>
    <property type="match status" value="1"/>
</dbReference>
<dbReference type="SUPFAM" id="SSF57302">
    <property type="entry name" value="Snake toxin-like"/>
    <property type="match status" value="1"/>
</dbReference>
<comment type="function">
    <text evidence="1">Potent inhibitor of the complement membrane attack complex (MAC) action, which protects self-cells from damage during complement activation. Acts by binding to the beta-haipins of C8 (C8A and C8B) components of the assembling MAC, forming an intermolecular beta-sheet that prevents incorporation of the multiple copies of C9 required for complete formation of the osmolytic pore.</text>
</comment>
<comment type="subunit">
    <text evidence="1">Interacts with T-cell surface antigen CD2.</text>
</comment>
<comment type="subcellular location">
    <subcellularLocation>
        <location evidence="1">Cell membrane</location>
        <topology evidence="1">Lipid-anchor</topology>
        <topology evidence="1">GPI-anchor</topology>
    </subcellularLocation>
    <subcellularLocation>
        <location evidence="1">Secreted</location>
    </subcellularLocation>
    <text evidence="1">Localizes to the cell surface. Soluble form found in a number of tissues.</text>
</comment>
<comment type="tissue specificity">
    <text evidence="3">Expressed in all tissues examined (liver, kidney, spleen, thymus, brain and heart). Low levels in thymus. Also expressed in mononuclear cells, erythrocytes and platelets. Barely detected in neutrophils.</text>
</comment>
<comment type="PTM">
    <text evidence="1">N- and O-glycosylated.</text>
</comment>
<sequence length="123" mass="13648">MRAQRGLILLLLLLAVFCSTAVSLTCYHCFQPVVSSCNMNSTCSPDQDSCLYAVAGMQVYQRCWKQSDCHGEIIMDQLEETKLKFRCCQFNLCNKSDGSLGKTPLLGTSVLVAILNLCFLSHL</sequence>